<organism>
    <name type="scientific">Citrobacter koseri (strain ATCC BAA-895 / CDC 4225-83 / SGSC4696)</name>
    <dbReference type="NCBI Taxonomy" id="290338"/>
    <lineage>
        <taxon>Bacteria</taxon>
        <taxon>Pseudomonadati</taxon>
        <taxon>Pseudomonadota</taxon>
        <taxon>Gammaproteobacteria</taxon>
        <taxon>Enterobacterales</taxon>
        <taxon>Enterobacteriaceae</taxon>
        <taxon>Citrobacter</taxon>
    </lineage>
</organism>
<comment type="function">
    <text evidence="1">Catalyzes the transfer of the enolpyruvyl moiety of phosphoenolpyruvate (PEP) to the 5-hydroxyl of shikimate-3-phosphate (S3P) to produce enolpyruvyl shikimate-3-phosphate and inorganic phosphate.</text>
</comment>
<comment type="catalytic activity">
    <reaction evidence="1">
        <text>3-phosphoshikimate + phosphoenolpyruvate = 5-O-(1-carboxyvinyl)-3-phosphoshikimate + phosphate</text>
        <dbReference type="Rhea" id="RHEA:21256"/>
        <dbReference type="ChEBI" id="CHEBI:43474"/>
        <dbReference type="ChEBI" id="CHEBI:57701"/>
        <dbReference type="ChEBI" id="CHEBI:58702"/>
        <dbReference type="ChEBI" id="CHEBI:145989"/>
        <dbReference type="EC" id="2.5.1.19"/>
    </reaction>
    <physiologicalReaction direction="left-to-right" evidence="1">
        <dbReference type="Rhea" id="RHEA:21257"/>
    </physiologicalReaction>
</comment>
<comment type="pathway">
    <text evidence="1">Metabolic intermediate biosynthesis; chorismate biosynthesis; chorismate from D-erythrose 4-phosphate and phosphoenolpyruvate: step 6/7.</text>
</comment>
<comment type="subunit">
    <text evidence="1">Monomer.</text>
</comment>
<comment type="subcellular location">
    <subcellularLocation>
        <location evidence="1">Cytoplasm</location>
    </subcellularLocation>
</comment>
<comment type="similarity">
    <text evidence="1">Belongs to the EPSP synthase family.</text>
</comment>
<accession>A8AIH5</accession>
<protein>
    <recommendedName>
        <fullName evidence="1">3-phosphoshikimate 1-carboxyvinyltransferase</fullName>
        <ecNumber evidence="1">2.5.1.19</ecNumber>
    </recommendedName>
    <alternativeName>
        <fullName evidence="1">5-enolpyruvylshikimate-3-phosphate synthase</fullName>
        <shortName evidence="1">EPSP synthase</shortName>
        <shortName evidence="1">EPSPS</shortName>
    </alternativeName>
</protein>
<reference key="1">
    <citation type="submission" date="2007-08" db="EMBL/GenBank/DDBJ databases">
        <authorList>
            <consortium name="The Citrobacter koseri Genome Sequencing Project"/>
            <person name="McClelland M."/>
            <person name="Sanderson E.K."/>
            <person name="Porwollik S."/>
            <person name="Spieth J."/>
            <person name="Clifton W.S."/>
            <person name="Latreille P."/>
            <person name="Courtney L."/>
            <person name="Wang C."/>
            <person name="Pepin K."/>
            <person name="Bhonagiri V."/>
            <person name="Nash W."/>
            <person name="Johnson M."/>
            <person name="Thiruvilangam P."/>
            <person name="Wilson R."/>
        </authorList>
    </citation>
    <scope>NUCLEOTIDE SEQUENCE [LARGE SCALE GENOMIC DNA]</scope>
    <source>
        <strain>ATCC BAA-895 / CDC 4225-83 / SGSC4696</strain>
    </source>
</reference>
<keyword id="KW-0028">Amino-acid biosynthesis</keyword>
<keyword id="KW-0057">Aromatic amino acid biosynthesis</keyword>
<keyword id="KW-0963">Cytoplasm</keyword>
<keyword id="KW-1185">Reference proteome</keyword>
<keyword id="KW-0808">Transferase</keyword>
<dbReference type="EC" id="2.5.1.19" evidence="1"/>
<dbReference type="EMBL" id="CP000822">
    <property type="protein sequence ID" value="ABV13288.1"/>
    <property type="molecule type" value="Genomic_DNA"/>
</dbReference>
<dbReference type="RefSeq" id="WP_012133019.1">
    <property type="nucleotide sequence ID" value="NC_009792.1"/>
</dbReference>
<dbReference type="SMR" id="A8AIH5"/>
<dbReference type="STRING" id="290338.CKO_02164"/>
<dbReference type="GeneID" id="45136100"/>
<dbReference type="KEGG" id="cko:CKO_02164"/>
<dbReference type="HOGENOM" id="CLU_024321_0_0_6"/>
<dbReference type="OrthoDB" id="9809920at2"/>
<dbReference type="UniPathway" id="UPA00053">
    <property type="reaction ID" value="UER00089"/>
</dbReference>
<dbReference type="Proteomes" id="UP000008148">
    <property type="component" value="Chromosome"/>
</dbReference>
<dbReference type="GO" id="GO:0005737">
    <property type="term" value="C:cytoplasm"/>
    <property type="evidence" value="ECO:0007669"/>
    <property type="project" value="UniProtKB-SubCell"/>
</dbReference>
<dbReference type="GO" id="GO:0003866">
    <property type="term" value="F:3-phosphoshikimate 1-carboxyvinyltransferase activity"/>
    <property type="evidence" value="ECO:0007669"/>
    <property type="project" value="UniProtKB-UniRule"/>
</dbReference>
<dbReference type="GO" id="GO:0008652">
    <property type="term" value="P:amino acid biosynthetic process"/>
    <property type="evidence" value="ECO:0007669"/>
    <property type="project" value="UniProtKB-KW"/>
</dbReference>
<dbReference type="GO" id="GO:0009073">
    <property type="term" value="P:aromatic amino acid family biosynthetic process"/>
    <property type="evidence" value="ECO:0007669"/>
    <property type="project" value="UniProtKB-KW"/>
</dbReference>
<dbReference type="GO" id="GO:0009423">
    <property type="term" value="P:chorismate biosynthetic process"/>
    <property type="evidence" value="ECO:0007669"/>
    <property type="project" value="UniProtKB-UniRule"/>
</dbReference>
<dbReference type="FunFam" id="3.65.10.10:FF:000003">
    <property type="entry name" value="3-phosphoshikimate 1-carboxyvinyltransferase"/>
    <property type="match status" value="1"/>
</dbReference>
<dbReference type="FunFam" id="3.65.10.10:FF:000004">
    <property type="entry name" value="3-phosphoshikimate 1-carboxyvinyltransferase"/>
    <property type="match status" value="1"/>
</dbReference>
<dbReference type="Gene3D" id="3.65.10.10">
    <property type="entry name" value="Enolpyruvate transferase domain"/>
    <property type="match status" value="2"/>
</dbReference>
<dbReference type="HAMAP" id="MF_00210">
    <property type="entry name" value="EPSP_synth"/>
    <property type="match status" value="1"/>
</dbReference>
<dbReference type="InterPro" id="IPR001986">
    <property type="entry name" value="Enolpyruvate_Tfrase_dom"/>
</dbReference>
<dbReference type="InterPro" id="IPR036968">
    <property type="entry name" value="Enolpyruvate_Tfrase_sf"/>
</dbReference>
<dbReference type="InterPro" id="IPR006264">
    <property type="entry name" value="EPSP_synthase"/>
</dbReference>
<dbReference type="InterPro" id="IPR023193">
    <property type="entry name" value="EPSP_synthase_CS"/>
</dbReference>
<dbReference type="InterPro" id="IPR013792">
    <property type="entry name" value="RNA3'P_cycl/enolpyr_Trfase_a/b"/>
</dbReference>
<dbReference type="NCBIfam" id="TIGR01356">
    <property type="entry name" value="aroA"/>
    <property type="match status" value="1"/>
</dbReference>
<dbReference type="PANTHER" id="PTHR21090">
    <property type="entry name" value="AROM/DEHYDROQUINATE SYNTHASE"/>
    <property type="match status" value="1"/>
</dbReference>
<dbReference type="PANTHER" id="PTHR21090:SF5">
    <property type="entry name" value="PENTAFUNCTIONAL AROM POLYPEPTIDE"/>
    <property type="match status" value="1"/>
</dbReference>
<dbReference type="Pfam" id="PF00275">
    <property type="entry name" value="EPSP_synthase"/>
    <property type="match status" value="1"/>
</dbReference>
<dbReference type="PIRSF" id="PIRSF000505">
    <property type="entry name" value="EPSPS"/>
    <property type="match status" value="1"/>
</dbReference>
<dbReference type="SUPFAM" id="SSF55205">
    <property type="entry name" value="EPT/RTPC-like"/>
    <property type="match status" value="1"/>
</dbReference>
<dbReference type="PROSITE" id="PS00104">
    <property type="entry name" value="EPSP_SYNTHASE_1"/>
    <property type="match status" value="1"/>
</dbReference>
<dbReference type="PROSITE" id="PS00885">
    <property type="entry name" value="EPSP_SYNTHASE_2"/>
    <property type="match status" value="1"/>
</dbReference>
<gene>
    <name evidence="1" type="primary">aroA</name>
    <name type="ordered locus">CKO_02164</name>
</gene>
<proteinExistence type="inferred from homology"/>
<name>AROA_CITK8</name>
<feature type="chain" id="PRO_1000012427" description="3-phosphoshikimate 1-carboxyvinyltransferase">
    <location>
        <begin position="1"/>
        <end position="427"/>
    </location>
</feature>
<feature type="active site" description="Proton acceptor" evidence="1">
    <location>
        <position position="313"/>
    </location>
</feature>
<feature type="binding site" evidence="1">
    <location>
        <position position="22"/>
    </location>
    <ligand>
        <name>3-phosphoshikimate</name>
        <dbReference type="ChEBI" id="CHEBI:145989"/>
    </ligand>
</feature>
<feature type="binding site" evidence="1">
    <location>
        <position position="22"/>
    </location>
    <ligand>
        <name>phosphoenolpyruvate</name>
        <dbReference type="ChEBI" id="CHEBI:58702"/>
    </ligand>
</feature>
<feature type="binding site" evidence="1">
    <location>
        <position position="23"/>
    </location>
    <ligand>
        <name>3-phosphoshikimate</name>
        <dbReference type="ChEBI" id="CHEBI:145989"/>
    </ligand>
</feature>
<feature type="binding site" evidence="1">
    <location>
        <position position="27"/>
    </location>
    <ligand>
        <name>3-phosphoshikimate</name>
        <dbReference type="ChEBI" id="CHEBI:145989"/>
    </ligand>
</feature>
<feature type="binding site" evidence="1">
    <location>
        <position position="96"/>
    </location>
    <ligand>
        <name>phosphoenolpyruvate</name>
        <dbReference type="ChEBI" id="CHEBI:58702"/>
    </ligand>
</feature>
<feature type="binding site" evidence="1">
    <location>
        <position position="124"/>
    </location>
    <ligand>
        <name>phosphoenolpyruvate</name>
        <dbReference type="ChEBI" id="CHEBI:58702"/>
    </ligand>
</feature>
<feature type="binding site" evidence="1">
    <location>
        <position position="169"/>
    </location>
    <ligand>
        <name>3-phosphoshikimate</name>
        <dbReference type="ChEBI" id="CHEBI:145989"/>
    </ligand>
</feature>
<feature type="binding site" evidence="1">
    <location>
        <position position="170"/>
    </location>
    <ligand>
        <name>3-phosphoshikimate</name>
        <dbReference type="ChEBI" id="CHEBI:145989"/>
    </ligand>
</feature>
<feature type="binding site" evidence="1">
    <location>
        <position position="171"/>
    </location>
    <ligand>
        <name>3-phosphoshikimate</name>
        <dbReference type="ChEBI" id="CHEBI:145989"/>
    </ligand>
</feature>
<feature type="binding site" evidence="1">
    <location>
        <position position="171"/>
    </location>
    <ligand>
        <name>phosphoenolpyruvate</name>
        <dbReference type="ChEBI" id="CHEBI:58702"/>
    </ligand>
</feature>
<feature type="binding site" evidence="1">
    <location>
        <position position="197"/>
    </location>
    <ligand>
        <name>3-phosphoshikimate</name>
        <dbReference type="ChEBI" id="CHEBI:145989"/>
    </ligand>
</feature>
<feature type="binding site" evidence="1">
    <location>
        <position position="313"/>
    </location>
    <ligand>
        <name>3-phosphoshikimate</name>
        <dbReference type="ChEBI" id="CHEBI:145989"/>
    </ligand>
</feature>
<feature type="binding site" evidence="1">
    <location>
        <position position="336"/>
    </location>
    <ligand>
        <name>3-phosphoshikimate</name>
        <dbReference type="ChEBI" id="CHEBI:145989"/>
    </ligand>
</feature>
<feature type="binding site" evidence="1">
    <location>
        <position position="340"/>
    </location>
    <ligand>
        <name>3-phosphoshikimate</name>
        <dbReference type="ChEBI" id="CHEBI:145989"/>
    </ligand>
</feature>
<feature type="binding site" evidence="1">
    <location>
        <position position="344"/>
    </location>
    <ligand>
        <name>phosphoenolpyruvate</name>
        <dbReference type="ChEBI" id="CHEBI:58702"/>
    </ligand>
</feature>
<feature type="binding site" evidence="1">
    <location>
        <position position="386"/>
    </location>
    <ligand>
        <name>phosphoenolpyruvate</name>
        <dbReference type="ChEBI" id="CHEBI:58702"/>
    </ligand>
</feature>
<feature type="binding site" evidence="1">
    <location>
        <position position="411"/>
    </location>
    <ligand>
        <name>phosphoenolpyruvate</name>
        <dbReference type="ChEBI" id="CHEBI:58702"/>
    </ligand>
</feature>
<evidence type="ECO:0000255" key="1">
    <source>
        <dbReference type="HAMAP-Rule" id="MF_00210"/>
    </source>
</evidence>
<sequence length="427" mass="46011">MESLTLQPIARVDGTINLPGSKSVSNRALLLAALASGTTVLTNLLDSDDVRHMLNALSALGVSYTLSADRTRCEITGQGGVLHAEGALELFLGNAGTAMRPLAAALCLGANDIVLTGEPRMKERPIGHLVDALRQGGAKIDYLEQENYPPLRLRGGFSGGHVEVDGSVSSQFLTALLMTAPLAPQDTTIAIKGDLVSKPYIDITLNLMKTFGVEVENQNYQRFVVKGEQQYRSPGQYLVEGDASSASYFLAAGAIKGGTVKVTGIGRNSMQGDIRFADVLEKMGATITWGDDFIACTRGELNAVDMDMNHIPDAAMTIATAALFAKGTTTLRNIYNWRVKETDRLFAMATELRKVGAEVEEGHDFIRITPPAQLQFAEIGTYNDHRMAMCFSLVALSDTPVTILDPKCTAKTFPDYFEQLARISTPA</sequence>